<reference key="1">
    <citation type="journal article" date="2007" name="J. Bacteriol.">
        <title>Genome sequence analysis of the emerging human pathogenic acetic acid bacterium Granulibacter bethesdensis.</title>
        <authorList>
            <person name="Greenberg D.E."/>
            <person name="Porcella S.F."/>
            <person name="Zelazny A.M."/>
            <person name="Virtaneva K."/>
            <person name="Sturdevant D.E."/>
            <person name="Kupko J.J. III"/>
            <person name="Barbian K.D."/>
            <person name="Babar A."/>
            <person name="Dorward D.W."/>
            <person name="Holland S.M."/>
        </authorList>
    </citation>
    <scope>NUCLEOTIDE SEQUENCE [LARGE SCALE GENOMIC DNA]</scope>
    <source>
        <strain>ATCC BAA-1260 / CGDNIH1</strain>
    </source>
</reference>
<feature type="chain" id="PRO_0000265025" description="Putative 3-methyladenine DNA glycosylase">
    <location>
        <begin position="1"/>
        <end position="211"/>
    </location>
</feature>
<protein>
    <recommendedName>
        <fullName evidence="1">Putative 3-methyladenine DNA glycosylase</fullName>
        <ecNumber evidence="1">3.2.2.-</ecNumber>
    </recommendedName>
</protein>
<comment type="similarity">
    <text evidence="1">Belongs to the DNA glycosylase MPG family.</text>
</comment>
<evidence type="ECO:0000255" key="1">
    <source>
        <dbReference type="HAMAP-Rule" id="MF_00527"/>
    </source>
</evidence>
<proteinExistence type="inferred from homology"/>
<accession>Q0BR48</accession>
<keyword id="KW-0227">DNA damage</keyword>
<keyword id="KW-0234">DNA repair</keyword>
<keyword id="KW-0378">Hydrolase</keyword>
<keyword id="KW-1185">Reference proteome</keyword>
<gene>
    <name type="ordered locus">GbCGDNIH1_1806</name>
</gene>
<name>3MGH_GRABC</name>
<sequence length="211" mass="22898">MKDCPDSLPVTSTGVPDGFWTRPVTEIARDLVGMTLLVDGCGGVIVETEAYDRDDPASHSFSGLTRRNASMFGLPGHAYVYRSYGIHWCFNIVCGPVPGGAVLIRALHPMFGLEAMQLRRGAIRLRDLCRGPGRLCQALGITDGMDGLSLCRPPFDLQPCHKTGEASDLIAAGPRIGITRAIETPWRFYQAESVFVSGSRSSRFLINKAGK</sequence>
<organism>
    <name type="scientific">Granulibacter bethesdensis (strain ATCC BAA-1260 / CGDNIH1)</name>
    <dbReference type="NCBI Taxonomy" id="391165"/>
    <lineage>
        <taxon>Bacteria</taxon>
        <taxon>Pseudomonadati</taxon>
        <taxon>Pseudomonadota</taxon>
        <taxon>Alphaproteobacteria</taxon>
        <taxon>Acetobacterales</taxon>
        <taxon>Acetobacteraceae</taxon>
        <taxon>Granulibacter</taxon>
    </lineage>
</organism>
<dbReference type="EC" id="3.2.2.-" evidence="1"/>
<dbReference type="EMBL" id="CP000394">
    <property type="protein sequence ID" value="ABI62704.1"/>
    <property type="molecule type" value="Genomic_DNA"/>
</dbReference>
<dbReference type="SMR" id="Q0BR48"/>
<dbReference type="STRING" id="391165.GbCGDNIH1_1806"/>
<dbReference type="KEGG" id="gbe:GbCGDNIH1_1806"/>
<dbReference type="eggNOG" id="COG2094">
    <property type="taxonomic scope" value="Bacteria"/>
</dbReference>
<dbReference type="HOGENOM" id="CLU_060471_3_0_5"/>
<dbReference type="OrthoDB" id="9794313at2"/>
<dbReference type="Proteomes" id="UP000001963">
    <property type="component" value="Chromosome"/>
</dbReference>
<dbReference type="GO" id="GO:0003905">
    <property type="term" value="F:alkylbase DNA N-glycosylase activity"/>
    <property type="evidence" value="ECO:0007669"/>
    <property type="project" value="InterPro"/>
</dbReference>
<dbReference type="GO" id="GO:0003677">
    <property type="term" value="F:DNA binding"/>
    <property type="evidence" value="ECO:0007669"/>
    <property type="project" value="InterPro"/>
</dbReference>
<dbReference type="GO" id="GO:0006284">
    <property type="term" value="P:base-excision repair"/>
    <property type="evidence" value="ECO:0007669"/>
    <property type="project" value="InterPro"/>
</dbReference>
<dbReference type="CDD" id="cd00540">
    <property type="entry name" value="AAG"/>
    <property type="match status" value="1"/>
</dbReference>
<dbReference type="Gene3D" id="3.10.300.10">
    <property type="entry name" value="Methylpurine-DNA glycosylase (MPG)"/>
    <property type="match status" value="1"/>
</dbReference>
<dbReference type="HAMAP" id="MF_00527">
    <property type="entry name" value="3MGH"/>
    <property type="match status" value="1"/>
</dbReference>
<dbReference type="InterPro" id="IPR011034">
    <property type="entry name" value="Formyl_transferase-like_C_sf"/>
</dbReference>
<dbReference type="InterPro" id="IPR003180">
    <property type="entry name" value="MPG"/>
</dbReference>
<dbReference type="InterPro" id="IPR036995">
    <property type="entry name" value="MPG_sf"/>
</dbReference>
<dbReference type="NCBIfam" id="TIGR00567">
    <property type="entry name" value="3mg"/>
    <property type="match status" value="1"/>
</dbReference>
<dbReference type="NCBIfam" id="NF002003">
    <property type="entry name" value="PRK00802.1-3"/>
    <property type="match status" value="1"/>
</dbReference>
<dbReference type="PANTHER" id="PTHR10429">
    <property type="entry name" value="DNA-3-METHYLADENINE GLYCOSYLASE"/>
    <property type="match status" value="1"/>
</dbReference>
<dbReference type="PANTHER" id="PTHR10429:SF0">
    <property type="entry name" value="DNA-3-METHYLADENINE GLYCOSYLASE"/>
    <property type="match status" value="1"/>
</dbReference>
<dbReference type="Pfam" id="PF02245">
    <property type="entry name" value="Pur_DNA_glyco"/>
    <property type="match status" value="1"/>
</dbReference>
<dbReference type="SUPFAM" id="SSF50486">
    <property type="entry name" value="FMT C-terminal domain-like"/>
    <property type="match status" value="1"/>
</dbReference>